<keyword id="KW-0204">Cytolysis</keyword>
<keyword id="KW-1015">Disulfide bond</keyword>
<keyword id="KW-1030">Host cell inner membrane</keyword>
<keyword id="KW-0578">Host cell lysis by virus</keyword>
<keyword id="KW-1032">Host cell membrane</keyword>
<keyword id="KW-1043">Host membrane</keyword>
<keyword id="KW-0472">Membrane</keyword>
<keyword id="KW-1185">Reference proteome</keyword>
<keyword id="KW-0735">Signal-anchor</keyword>
<keyword id="KW-0812">Transmembrane</keyword>
<keyword id="KW-1133">Transmembrane helix</keyword>
<keyword id="KW-1188">Viral release from host cell</keyword>
<organismHost>
    <name type="scientific">Salmonella typhimurium</name>
    <dbReference type="NCBI Taxonomy" id="90371"/>
</organismHost>
<comment type="function">
    <text evidence="2">Component of the spanin complex that disrupts the host outer membrane and participates in cell lysis during virus exit. The spanin complex conducts the final step in host lysis by disrupting the outer membrane after holin and endolysin action have permeabilized the inner membrane and degraded the host peptidoglycans. Host outer membrane disruption is due to local fusion between the inner and outer membrane performed by the spanin complex.</text>
</comment>
<comment type="subunit">
    <text evidence="2">Homodimer; disulfide-linked. Interacts (via C-terminus) with the spanin outer lipoprotein subunit (via C-terminus). Part of the spanin complex which spans the entire periplasmic space. The spanin complex is composed of one homodimer of the i-spanin linked by intermolecular disulfide bonds involving two Cys residues and one homodimer of the o-spanin covalently linked by an intermolecular disulfide bond involving one Cys.</text>
</comment>
<comment type="subcellular location">
    <subcellularLocation>
        <location evidence="2">Host cell inner membrane</location>
        <topology evidence="2">Single-pass type II membrane protein</topology>
        <orientation evidence="2">Periplasmic side</orientation>
    </subcellularLocation>
</comment>
<comment type="similarity">
    <text evidence="2">Belongs to the Lambdavirus i-spanin family.</text>
</comment>
<feature type="chain" id="PRO_0000077568" description="Spanin, inner membrane subunit">
    <location>
        <begin position="1"/>
        <end position="145"/>
    </location>
</feature>
<feature type="topological domain" description="Cytoplasmic" evidence="1">
    <location>
        <begin position="1"/>
        <end position="3"/>
    </location>
</feature>
<feature type="transmembrane region" description="Helical; Signal-anchor for type II membrane protein" evidence="1">
    <location>
        <begin position="4"/>
        <end position="24"/>
    </location>
</feature>
<feature type="topological domain" description="Periplasmic" evidence="1">
    <location>
        <begin position="25"/>
        <end position="145"/>
    </location>
</feature>
<feature type="disulfide bond" description="Interchain" evidence="2">
    <location>
        <position position="92"/>
    </location>
</feature>
<feature type="disulfide bond" description="Interchain" evidence="2">
    <location>
        <position position="143"/>
    </location>
</feature>
<name>SPAN1_BPP22</name>
<evidence type="ECO:0000255" key="1"/>
<evidence type="ECO:0000255" key="2">
    <source>
        <dbReference type="HAMAP-Rule" id="MF_04137"/>
    </source>
</evidence>
<gene>
    <name type="primary">15</name>
</gene>
<accession>P13583</accession>
<accession>Q7PCD4</accession>
<reference key="1">
    <citation type="journal article" date="1989" name="Virology">
        <title>Nucleotide sequence of the bacteriophage P22 gene 19 to 3 region: identification of a new gene required for lysis.</title>
        <authorList>
            <person name="Casjens S."/>
            <person name="Eppler K."/>
            <person name="Parr R."/>
            <person name="Poteete A.R."/>
        </authorList>
    </citation>
    <scope>NUCLEOTIDE SEQUENCE [GENOMIC DNA]</scope>
    <scope>FUNCTION</scope>
</reference>
<reference key="2">
    <citation type="journal article" date="2000" name="J. Bacteriol.">
        <title>Sequence of the genome of Salmonella bacteriophage P22.</title>
        <authorList>
            <person name="Vander Byl C.S."/>
            <person name="Kropinski A.M.B."/>
        </authorList>
    </citation>
    <scope>NUCLEOTIDE SEQUENCE [LARGE SCALE GENOMIC DNA]</scope>
</reference>
<reference key="3">
    <citation type="journal article" date="2003" name="J. Bacteriol.">
        <title>Corrected sequence of the bacteriophage P22 genome.</title>
        <authorList>
            <person name="Pedulla M.L."/>
            <person name="Ford M.E."/>
            <person name="Karthikeyan T."/>
            <person name="Houtz J.M."/>
            <person name="Hendrix R.W."/>
            <person name="Hatfull G.F."/>
            <person name="Poteete A.R."/>
            <person name="Gilcrease E.B."/>
            <person name="Winn-Stapley D.A."/>
            <person name="Casjens S.R."/>
        </authorList>
    </citation>
    <scope>NUCLEOTIDE SEQUENCE [LARGE SCALE GENOMIC DNA]</scope>
</reference>
<protein>
    <recommendedName>
        <fullName evidence="2">Spanin, inner membrane subunit</fullName>
        <shortName evidence="2">i-spanin</shortName>
    </recommendedName>
    <alternativeName>
        <fullName>Gene product 15</fullName>
        <shortName>Gp15</shortName>
    </alternativeName>
    <alternativeName>
        <fullName evidence="2">Lysis protein Rz</fullName>
    </alternativeName>
</protein>
<proteinExistence type="inferred from homology"/>
<organism>
    <name type="scientific">Salmonella phage P22</name>
    <name type="common">Bacteriophage P22</name>
    <dbReference type="NCBI Taxonomy" id="10754"/>
    <lineage>
        <taxon>Viruses</taxon>
        <taxon>Duplodnaviria</taxon>
        <taxon>Heunggongvirae</taxon>
        <taxon>Uroviricota</taxon>
        <taxon>Caudoviricetes</taxon>
        <taxon>Lederbergvirus</taxon>
    </lineage>
</organism>
<sequence length="145" mass="16219">MSRIKAIIASVIICIIVCLSWAVNHYRDNAITYKEQRDKATSIIADMQKRQRDVAELDARYTKELADANATIETLRADVSAGRKRLQVSATCPKSTTGASGMGDGESPRLTADAELNYYRLRSGIDRITAQVNYLQEYIRSQCLK</sequence>
<dbReference type="EMBL" id="J04356">
    <property type="protein sequence ID" value="AAA88341.1"/>
    <property type="molecule type" value="Genomic_DNA"/>
</dbReference>
<dbReference type="EMBL" id="AF217253">
    <property type="protein sequence ID" value="AAF75041.2"/>
    <property type="molecule type" value="Genomic_DNA"/>
</dbReference>
<dbReference type="EMBL" id="BK000583">
    <property type="protein sequence ID" value="DAA01041.1"/>
    <property type="molecule type" value="Genomic_DNA"/>
</dbReference>
<dbReference type="PIR" id="A33080">
    <property type="entry name" value="APBP22"/>
</dbReference>
<dbReference type="RefSeq" id="NP_059623.2">
    <property type="nucleotide sequence ID" value="NC_002371.2"/>
</dbReference>
<dbReference type="SMR" id="P13583"/>
<dbReference type="MEROPS" id="X19.001"/>
<dbReference type="TCDB" id="1.M.1.1.4">
    <property type="family name" value="the rz/rz1 spanin1 (rz(1)) family"/>
</dbReference>
<dbReference type="OrthoDB" id="12441at10239"/>
<dbReference type="Proteomes" id="UP000001795">
    <property type="component" value="Segment"/>
</dbReference>
<dbReference type="Proteomes" id="UP000007960">
    <property type="component" value="Segment"/>
</dbReference>
<dbReference type="GO" id="GO:0020002">
    <property type="term" value="C:host cell plasma membrane"/>
    <property type="evidence" value="ECO:0007669"/>
    <property type="project" value="UniProtKB-SubCell"/>
</dbReference>
<dbReference type="GO" id="GO:0016020">
    <property type="term" value="C:membrane"/>
    <property type="evidence" value="ECO:0007669"/>
    <property type="project" value="UniProtKB-KW"/>
</dbReference>
<dbReference type="GO" id="GO:0044659">
    <property type="term" value="P:viral release from host cell by cytolysis"/>
    <property type="evidence" value="ECO:0007669"/>
    <property type="project" value="UniProtKB-UniRule"/>
</dbReference>
<dbReference type="HAMAP" id="MF_04137">
    <property type="entry name" value="I_SPANIN_LAMBDA"/>
    <property type="match status" value="1"/>
</dbReference>
<dbReference type="InterPro" id="IPR004929">
    <property type="entry name" value="I-spanin"/>
</dbReference>
<dbReference type="Pfam" id="PF03245">
    <property type="entry name" value="Phage_lysis"/>
    <property type="match status" value="1"/>
</dbReference>